<proteinExistence type="inferred from homology"/>
<evidence type="ECO:0000250" key="1"/>
<evidence type="ECO:0000250" key="2">
    <source>
        <dbReference type="UniProtKB" id="P32469"/>
    </source>
</evidence>
<evidence type="ECO:0000305" key="3"/>
<sequence>MFYLIGLGLFDEKDITLRGLETVKKCQRIYLEAYTSILLVQKEKLEELYGKEVILADREMVESSSDEILKDADNCDVAMLVVGDPMGATTHADLVIRARELKIPVRMIHNASIMNAIGACGLQLYKFGQTVSLVFFENNYRPQSFYDHIKENVSLGLHTLVLLDIKVKEQSWENLARGRKVYEPPRYMSASLAAQQMLEVEEDRQENICTPDSLCVAVGRMGSDDQVIFAGTLQELAEHDIGPPLHSVVLVGRDVHDLELEFLRAYAVNLENFDRVAKTYLEK</sequence>
<dbReference type="EC" id="2.1.1.314"/>
<dbReference type="EMBL" id="CU329672">
    <property type="protein sequence ID" value="CAA21193.1"/>
    <property type="molecule type" value="Genomic_DNA"/>
</dbReference>
<dbReference type="PIR" id="T41424">
    <property type="entry name" value="T41424"/>
</dbReference>
<dbReference type="RefSeq" id="NP_588441.1">
    <property type="nucleotide sequence ID" value="NM_001023432.2"/>
</dbReference>
<dbReference type="SMR" id="O74898"/>
<dbReference type="BioGRID" id="276034">
    <property type="interactions" value="18"/>
</dbReference>
<dbReference type="FunCoup" id="O74898">
    <property type="interactions" value="714"/>
</dbReference>
<dbReference type="STRING" id="284812.O74898"/>
<dbReference type="iPTMnet" id="O74898"/>
<dbReference type="PaxDb" id="4896-SPCC576.14.1"/>
<dbReference type="EnsemblFungi" id="SPCC576.14.1">
    <property type="protein sequence ID" value="SPCC576.14.1:pep"/>
    <property type="gene ID" value="SPCC576.14"/>
</dbReference>
<dbReference type="GeneID" id="2539471"/>
<dbReference type="KEGG" id="spo:2539471"/>
<dbReference type="PomBase" id="SPCC576.14">
    <property type="gene designation" value="dph5"/>
</dbReference>
<dbReference type="VEuPathDB" id="FungiDB:SPCC576.14"/>
<dbReference type="eggNOG" id="KOG3123">
    <property type="taxonomic scope" value="Eukaryota"/>
</dbReference>
<dbReference type="HOGENOM" id="CLU_066040_1_0_1"/>
<dbReference type="InParanoid" id="O74898"/>
<dbReference type="OMA" id="HNASIMS"/>
<dbReference type="PhylomeDB" id="O74898"/>
<dbReference type="Reactome" id="R-SPO-5358493">
    <property type="pathway name" value="Synthesis of diphthamide-EEF2"/>
</dbReference>
<dbReference type="UniPathway" id="UPA00559"/>
<dbReference type="PRO" id="PR:O74898"/>
<dbReference type="Proteomes" id="UP000002485">
    <property type="component" value="Chromosome III"/>
</dbReference>
<dbReference type="GO" id="GO:0005829">
    <property type="term" value="C:cytosol"/>
    <property type="evidence" value="ECO:0007005"/>
    <property type="project" value="PomBase"/>
</dbReference>
<dbReference type="GO" id="GO:0005634">
    <property type="term" value="C:nucleus"/>
    <property type="evidence" value="ECO:0007005"/>
    <property type="project" value="PomBase"/>
</dbReference>
<dbReference type="GO" id="GO:0141133">
    <property type="term" value="F:diphthine methyl ester synthase activity"/>
    <property type="evidence" value="ECO:0000266"/>
    <property type="project" value="PomBase"/>
</dbReference>
<dbReference type="GO" id="GO:0032259">
    <property type="term" value="P:methylation"/>
    <property type="evidence" value="ECO:0007669"/>
    <property type="project" value="UniProtKB-KW"/>
</dbReference>
<dbReference type="GO" id="GO:0017183">
    <property type="term" value="P:protein histidyl modification to diphthamide"/>
    <property type="evidence" value="ECO:0000250"/>
    <property type="project" value="UniProtKB"/>
</dbReference>
<dbReference type="GO" id="GO:2000765">
    <property type="term" value="P:regulation of cytoplasmic translation"/>
    <property type="evidence" value="ECO:0000305"/>
    <property type="project" value="PomBase"/>
</dbReference>
<dbReference type="CDD" id="cd11647">
    <property type="entry name" value="DHP5_DphB"/>
    <property type="match status" value="1"/>
</dbReference>
<dbReference type="FunFam" id="3.30.950.10:FF:000004">
    <property type="entry name" value="Diphthine synthase putative"/>
    <property type="match status" value="1"/>
</dbReference>
<dbReference type="FunFam" id="3.40.1010.10:FF:000004">
    <property type="entry name" value="Putative diphthine synthase"/>
    <property type="match status" value="1"/>
</dbReference>
<dbReference type="Gene3D" id="3.40.1010.10">
    <property type="entry name" value="Cobalt-precorrin-4 Transmethylase, Domain 1"/>
    <property type="match status" value="1"/>
</dbReference>
<dbReference type="Gene3D" id="3.30.950.10">
    <property type="entry name" value="Methyltransferase, Cobalt-precorrin-4 Transmethylase, Domain 2"/>
    <property type="match status" value="1"/>
</dbReference>
<dbReference type="HAMAP" id="MF_01084">
    <property type="entry name" value="Diphthine_synth"/>
    <property type="match status" value="1"/>
</dbReference>
<dbReference type="InterPro" id="IPR000878">
    <property type="entry name" value="4pyrrol_Mease"/>
</dbReference>
<dbReference type="InterPro" id="IPR035996">
    <property type="entry name" value="4pyrrol_Methylase_sf"/>
</dbReference>
<dbReference type="InterPro" id="IPR014777">
    <property type="entry name" value="4pyrrole_Mease_sub1"/>
</dbReference>
<dbReference type="InterPro" id="IPR014776">
    <property type="entry name" value="4pyrrole_Mease_sub2"/>
</dbReference>
<dbReference type="InterPro" id="IPR004551">
    <property type="entry name" value="Dphthn_synthase"/>
</dbReference>
<dbReference type="NCBIfam" id="TIGR00522">
    <property type="entry name" value="dph5"/>
    <property type="match status" value="1"/>
</dbReference>
<dbReference type="PANTHER" id="PTHR10882:SF0">
    <property type="entry name" value="DIPHTHINE METHYL ESTER SYNTHASE"/>
    <property type="match status" value="1"/>
</dbReference>
<dbReference type="PANTHER" id="PTHR10882">
    <property type="entry name" value="DIPHTHINE SYNTHASE"/>
    <property type="match status" value="1"/>
</dbReference>
<dbReference type="Pfam" id="PF00590">
    <property type="entry name" value="TP_methylase"/>
    <property type="match status" value="1"/>
</dbReference>
<dbReference type="PIRSF" id="PIRSF036432">
    <property type="entry name" value="Diphthine_synth"/>
    <property type="match status" value="1"/>
</dbReference>
<dbReference type="SUPFAM" id="SSF53790">
    <property type="entry name" value="Tetrapyrrole methylase"/>
    <property type="match status" value="1"/>
</dbReference>
<protein>
    <recommendedName>
        <fullName>Diphthine methyl ester synthase</fullName>
        <ecNumber>2.1.1.314</ecNumber>
    </recommendedName>
    <alternativeName>
        <fullName>Diphthamide biosynthesis methyltransferase</fullName>
    </alternativeName>
</protein>
<keyword id="KW-0963">Cytoplasm</keyword>
<keyword id="KW-0489">Methyltransferase</keyword>
<keyword id="KW-1185">Reference proteome</keyword>
<keyword id="KW-0949">S-adenosyl-L-methionine</keyword>
<keyword id="KW-0808">Transferase</keyword>
<comment type="function">
    <text evidence="2">S-adenosyl-L-methionine-dependent methyltransferase that catalyzes four methylations of the modified target histidine residue in translation elongation factor 2 (EF-2), to form an intermediate called diphthine methyl ester. The four successive methylation reactions represent the second step of diphthamide biosynthesis.</text>
</comment>
<comment type="catalytic activity">
    <reaction evidence="2">
        <text>2-[(3S)-amino-3-carboxypropyl]-L-histidyl-[translation elongation factor 2] + 4 S-adenosyl-L-methionine = diphthine methyl ester-[translation elongation factor 2] + 4 S-adenosyl-L-homocysteine + 3 H(+)</text>
        <dbReference type="Rhea" id="RHEA:42652"/>
        <dbReference type="Rhea" id="RHEA-COMP:9749"/>
        <dbReference type="Rhea" id="RHEA-COMP:10173"/>
        <dbReference type="ChEBI" id="CHEBI:15378"/>
        <dbReference type="ChEBI" id="CHEBI:57856"/>
        <dbReference type="ChEBI" id="CHEBI:59789"/>
        <dbReference type="ChEBI" id="CHEBI:73995"/>
        <dbReference type="ChEBI" id="CHEBI:79005"/>
        <dbReference type="EC" id="2.1.1.314"/>
    </reaction>
</comment>
<comment type="pathway">
    <text>Protein modification; peptidyl-diphthamide biosynthesis.</text>
</comment>
<comment type="subcellular location">
    <subcellularLocation>
        <location evidence="1">Cytoplasm</location>
    </subcellularLocation>
</comment>
<comment type="similarity">
    <text evidence="3">Belongs to the diphthine synthase family.</text>
</comment>
<name>DPH5_SCHPO</name>
<organism>
    <name type="scientific">Schizosaccharomyces pombe (strain 972 / ATCC 24843)</name>
    <name type="common">Fission yeast</name>
    <dbReference type="NCBI Taxonomy" id="284812"/>
    <lineage>
        <taxon>Eukaryota</taxon>
        <taxon>Fungi</taxon>
        <taxon>Dikarya</taxon>
        <taxon>Ascomycota</taxon>
        <taxon>Taphrinomycotina</taxon>
        <taxon>Schizosaccharomycetes</taxon>
        <taxon>Schizosaccharomycetales</taxon>
        <taxon>Schizosaccharomycetaceae</taxon>
        <taxon>Schizosaccharomyces</taxon>
    </lineage>
</organism>
<gene>
    <name type="primary">dph5</name>
    <name type="ORF">SPCC576.14</name>
</gene>
<accession>O74898</accession>
<feature type="chain" id="PRO_0000156145" description="Diphthine methyl ester synthase">
    <location>
        <begin position="1"/>
        <end position="283"/>
    </location>
</feature>
<feature type="binding site" evidence="1">
    <location>
        <position position="9"/>
    </location>
    <ligand>
        <name>S-adenosyl-L-methionine</name>
        <dbReference type="ChEBI" id="CHEBI:59789"/>
    </ligand>
</feature>
<feature type="binding site" evidence="1">
    <location>
        <position position="84"/>
    </location>
    <ligand>
        <name>S-adenosyl-L-methionine</name>
        <dbReference type="ChEBI" id="CHEBI:59789"/>
    </ligand>
</feature>
<feature type="binding site" evidence="1">
    <location>
        <position position="87"/>
    </location>
    <ligand>
        <name>S-adenosyl-L-methionine</name>
        <dbReference type="ChEBI" id="CHEBI:59789"/>
    </ligand>
</feature>
<feature type="binding site" evidence="1">
    <location>
        <begin position="112"/>
        <end position="113"/>
    </location>
    <ligand>
        <name>S-adenosyl-L-methionine</name>
        <dbReference type="ChEBI" id="CHEBI:59789"/>
    </ligand>
</feature>
<feature type="binding site" evidence="1">
    <location>
        <position position="163"/>
    </location>
    <ligand>
        <name>S-adenosyl-L-methionine</name>
        <dbReference type="ChEBI" id="CHEBI:59789"/>
    </ligand>
</feature>
<feature type="binding site" evidence="1">
    <location>
        <position position="221"/>
    </location>
    <ligand>
        <name>S-adenosyl-L-methionine</name>
        <dbReference type="ChEBI" id="CHEBI:59789"/>
    </ligand>
</feature>
<feature type="binding site" evidence="1">
    <location>
        <position position="246"/>
    </location>
    <ligand>
        <name>S-adenosyl-L-methionine</name>
        <dbReference type="ChEBI" id="CHEBI:59789"/>
    </ligand>
</feature>
<reference key="1">
    <citation type="journal article" date="2002" name="Nature">
        <title>The genome sequence of Schizosaccharomyces pombe.</title>
        <authorList>
            <person name="Wood V."/>
            <person name="Gwilliam R."/>
            <person name="Rajandream M.A."/>
            <person name="Lyne M.H."/>
            <person name="Lyne R."/>
            <person name="Stewart A."/>
            <person name="Sgouros J.G."/>
            <person name="Peat N."/>
            <person name="Hayles J."/>
            <person name="Baker S.G."/>
            <person name="Basham D."/>
            <person name="Bowman S."/>
            <person name="Brooks K."/>
            <person name="Brown D."/>
            <person name="Brown S."/>
            <person name="Chillingworth T."/>
            <person name="Churcher C.M."/>
            <person name="Collins M."/>
            <person name="Connor R."/>
            <person name="Cronin A."/>
            <person name="Davis P."/>
            <person name="Feltwell T."/>
            <person name="Fraser A."/>
            <person name="Gentles S."/>
            <person name="Goble A."/>
            <person name="Hamlin N."/>
            <person name="Harris D.E."/>
            <person name="Hidalgo J."/>
            <person name="Hodgson G."/>
            <person name="Holroyd S."/>
            <person name="Hornsby T."/>
            <person name="Howarth S."/>
            <person name="Huckle E.J."/>
            <person name="Hunt S."/>
            <person name="Jagels K."/>
            <person name="James K.D."/>
            <person name="Jones L."/>
            <person name="Jones M."/>
            <person name="Leather S."/>
            <person name="McDonald S."/>
            <person name="McLean J."/>
            <person name="Mooney P."/>
            <person name="Moule S."/>
            <person name="Mungall K.L."/>
            <person name="Murphy L.D."/>
            <person name="Niblett D."/>
            <person name="Odell C."/>
            <person name="Oliver K."/>
            <person name="O'Neil S."/>
            <person name="Pearson D."/>
            <person name="Quail M.A."/>
            <person name="Rabbinowitsch E."/>
            <person name="Rutherford K.M."/>
            <person name="Rutter S."/>
            <person name="Saunders D."/>
            <person name="Seeger K."/>
            <person name="Sharp S."/>
            <person name="Skelton J."/>
            <person name="Simmonds M.N."/>
            <person name="Squares R."/>
            <person name="Squares S."/>
            <person name="Stevens K."/>
            <person name="Taylor K."/>
            <person name="Taylor R.G."/>
            <person name="Tivey A."/>
            <person name="Walsh S.V."/>
            <person name="Warren T."/>
            <person name="Whitehead S."/>
            <person name="Woodward J.R."/>
            <person name="Volckaert G."/>
            <person name="Aert R."/>
            <person name="Robben J."/>
            <person name="Grymonprez B."/>
            <person name="Weltjens I."/>
            <person name="Vanstreels E."/>
            <person name="Rieger M."/>
            <person name="Schaefer M."/>
            <person name="Mueller-Auer S."/>
            <person name="Gabel C."/>
            <person name="Fuchs M."/>
            <person name="Duesterhoeft A."/>
            <person name="Fritzc C."/>
            <person name="Holzer E."/>
            <person name="Moestl D."/>
            <person name="Hilbert H."/>
            <person name="Borzym K."/>
            <person name="Langer I."/>
            <person name="Beck A."/>
            <person name="Lehrach H."/>
            <person name="Reinhardt R."/>
            <person name="Pohl T.M."/>
            <person name="Eger P."/>
            <person name="Zimmermann W."/>
            <person name="Wedler H."/>
            <person name="Wambutt R."/>
            <person name="Purnelle B."/>
            <person name="Goffeau A."/>
            <person name="Cadieu E."/>
            <person name="Dreano S."/>
            <person name="Gloux S."/>
            <person name="Lelaure V."/>
            <person name="Mottier S."/>
            <person name="Galibert F."/>
            <person name="Aves S.J."/>
            <person name="Xiang Z."/>
            <person name="Hunt C."/>
            <person name="Moore K."/>
            <person name="Hurst S.M."/>
            <person name="Lucas M."/>
            <person name="Rochet M."/>
            <person name="Gaillardin C."/>
            <person name="Tallada V.A."/>
            <person name="Garzon A."/>
            <person name="Thode G."/>
            <person name="Daga R.R."/>
            <person name="Cruzado L."/>
            <person name="Jimenez J."/>
            <person name="Sanchez M."/>
            <person name="del Rey F."/>
            <person name="Benito J."/>
            <person name="Dominguez A."/>
            <person name="Revuelta J.L."/>
            <person name="Moreno S."/>
            <person name="Armstrong J."/>
            <person name="Forsburg S.L."/>
            <person name="Cerutti L."/>
            <person name="Lowe T."/>
            <person name="McCombie W.R."/>
            <person name="Paulsen I."/>
            <person name="Potashkin J."/>
            <person name="Shpakovski G.V."/>
            <person name="Ussery D."/>
            <person name="Barrell B.G."/>
            <person name="Nurse P."/>
        </authorList>
    </citation>
    <scope>NUCLEOTIDE SEQUENCE [LARGE SCALE GENOMIC DNA]</scope>
    <source>
        <strain>972 / ATCC 24843</strain>
    </source>
</reference>